<proteinExistence type="inferred from homology"/>
<name>MED4_CRYNJ</name>
<keyword id="KW-0010">Activator</keyword>
<keyword id="KW-0175">Coiled coil</keyword>
<keyword id="KW-0539">Nucleus</keyword>
<keyword id="KW-1185">Reference proteome</keyword>
<keyword id="KW-0804">Transcription</keyword>
<keyword id="KW-0805">Transcription regulation</keyword>
<evidence type="ECO:0000250" key="1"/>
<evidence type="ECO:0000255" key="2"/>
<evidence type="ECO:0000256" key="3">
    <source>
        <dbReference type="SAM" id="MobiDB-lite"/>
    </source>
</evidence>
<evidence type="ECO:0000305" key="4"/>
<organism>
    <name type="scientific">Cryptococcus neoformans var. neoformans serotype D (strain JEC21 / ATCC MYA-565)</name>
    <name type="common">Filobasidiella neoformans</name>
    <dbReference type="NCBI Taxonomy" id="214684"/>
    <lineage>
        <taxon>Eukaryota</taxon>
        <taxon>Fungi</taxon>
        <taxon>Dikarya</taxon>
        <taxon>Basidiomycota</taxon>
        <taxon>Agaricomycotina</taxon>
        <taxon>Tremellomycetes</taxon>
        <taxon>Tremellales</taxon>
        <taxon>Cryptococcaceae</taxon>
        <taxon>Cryptococcus</taxon>
        <taxon>Cryptococcus neoformans species complex</taxon>
    </lineage>
</organism>
<protein>
    <recommendedName>
        <fullName>Mediator of RNA polymerase II transcription subunit 4</fullName>
    </recommendedName>
    <alternativeName>
        <fullName>Mediator complex subunit 4</fullName>
    </alternativeName>
</protein>
<dbReference type="EMBL" id="AE017346">
    <property type="protein sequence ID" value="AAW44207.1"/>
    <property type="molecule type" value="Genomic_DNA"/>
</dbReference>
<dbReference type="RefSeq" id="XP_571514.1">
    <property type="nucleotide sequence ID" value="XM_571514.1"/>
</dbReference>
<dbReference type="SMR" id="P0CO72"/>
<dbReference type="STRING" id="214684.P0CO72"/>
<dbReference type="PaxDb" id="214684-P0CO72"/>
<dbReference type="EnsemblFungi" id="AAW44207">
    <property type="protein sequence ID" value="AAW44207"/>
    <property type="gene ID" value="CNF01730"/>
</dbReference>
<dbReference type="GeneID" id="3258430"/>
<dbReference type="KEGG" id="cne:CNF01730"/>
<dbReference type="VEuPathDB" id="FungiDB:CNF01730"/>
<dbReference type="eggNOG" id="ENOG502SDCP">
    <property type="taxonomic scope" value="Eukaryota"/>
</dbReference>
<dbReference type="HOGENOM" id="CLU_1200540_0_0_1"/>
<dbReference type="InParanoid" id="P0CO72"/>
<dbReference type="OMA" id="ICMELAN"/>
<dbReference type="OrthoDB" id="1929813at2759"/>
<dbReference type="Proteomes" id="UP000002149">
    <property type="component" value="Chromosome 6"/>
</dbReference>
<dbReference type="GO" id="GO:0070847">
    <property type="term" value="C:core mediator complex"/>
    <property type="evidence" value="ECO:0000318"/>
    <property type="project" value="GO_Central"/>
</dbReference>
<dbReference type="GO" id="GO:0016592">
    <property type="term" value="C:mediator complex"/>
    <property type="evidence" value="ECO:0007669"/>
    <property type="project" value="InterPro"/>
</dbReference>
<dbReference type="GO" id="GO:0003712">
    <property type="term" value="F:transcription coregulator activity"/>
    <property type="evidence" value="ECO:0000318"/>
    <property type="project" value="GO_Central"/>
</dbReference>
<dbReference type="GO" id="GO:0006357">
    <property type="term" value="P:regulation of transcription by RNA polymerase II"/>
    <property type="evidence" value="ECO:0000318"/>
    <property type="project" value="GO_Central"/>
</dbReference>
<dbReference type="InterPro" id="IPR019258">
    <property type="entry name" value="Mediator_Med4"/>
</dbReference>
<dbReference type="PANTHER" id="PTHR13208">
    <property type="entry name" value="MEDIATOR OF RNA POLYMERASE II TRANSCRIPTION SUBUNIT 4"/>
    <property type="match status" value="1"/>
</dbReference>
<dbReference type="PANTHER" id="PTHR13208:SF2">
    <property type="entry name" value="MEDIATOR OF RNA POLYMERASE II TRANSCRIPTION SUBUNIT 4"/>
    <property type="match status" value="1"/>
</dbReference>
<dbReference type="Pfam" id="PF10018">
    <property type="entry name" value="Med4"/>
    <property type="match status" value="1"/>
</dbReference>
<sequence>MAHTTPRSHPPPHSLLQNLTTQSLLLSHLFTLIASPPNPNTSTQTQLNQVYSALQLSTLDLSGLVKEVGHHQEAYRRLVEKKNEVAGLEMRVRGLVKRLEEGRKELEGMIDQGERSLEDIEKSEREPVPAKTLMAHAQSLSKHSSAPVSSLLAPVDKAQYAPWPTEMSMRMGLLFQLEGSMSGMGERGVVGEEQKAPQKVEERREHVEHEESDRRYDPNAVFQLDLNSDESDED</sequence>
<feature type="chain" id="PRO_0000302076" description="Mediator of RNA polymerase II transcription subunit 4">
    <location>
        <begin position="1"/>
        <end position="234"/>
    </location>
</feature>
<feature type="region of interest" description="Disordered" evidence="3">
    <location>
        <begin position="188"/>
        <end position="234"/>
    </location>
</feature>
<feature type="coiled-coil region" evidence="2">
    <location>
        <begin position="71"/>
        <end position="124"/>
    </location>
</feature>
<feature type="compositionally biased region" description="Basic and acidic residues" evidence="3">
    <location>
        <begin position="189"/>
        <end position="217"/>
    </location>
</feature>
<gene>
    <name type="primary">MED4</name>
    <name type="ordered locus">CNF01730</name>
</gene>
<reference key="1">
    <citation type="journal article" date="2005" name="Science">
        <title>The genome of the basidiomycetous yeast and human pathogen Cryptococcus neoformans.</title>
        <authorList>
            <person name="Loftus B.J."/>
            <person name="Fung E."/>
            <person name="Roncaglia P."/>
            <person name="Rowley D."/>
            <person name="Amedeo P."/>
            <person name="Bruno D."/>
            <person name="Vamathevan J."/>
            <person name="Miranda M."/>
            <person name="Anderson I.J."/>
            <person name="Fraser J.A."/>
            <person name="Allen J.E."/>
            <person name="Bosdet I.E."/>
            <person name="Brent M.R."/>
            <person name="Chiu R."/>
            <person name="Doering T.L."/>
            <person name="Donlin M.J."/>
            <person name="D'Souza C.A."/>
            <person name="Fox D.S."/>
            <person name="Grinberg V."/>
            <person name="Fu J."/>
            <person name="Fukushima M."/>
            <person name="Haas B.J."/>
            <person name="Huang J.C."/>
            <person name="Janbon G."/>
            <person name="Jones S.J.M."/>
            <person name="Koo H.L."/>
            <person name="Krzywinski M.I."/>
            <person name="Kwon-Chung K.J."/>
            <person name="Lengeler K.B."/>
            <person name="Maiti R."/>
            <person name="Marra M.A."/>
            <person name="Marra R.E."/>
            <person name="Mathewson C.A."/>
            <person name="Mitchell T.G."/>
            <person name="Pertea M."/>
            <person name="Riggs F.R."/>
            <person name="Salzberg S.L."/>
            <person name="Schein J.E."/>
            <person name="Shvartsbeyn A."/>
            <person name="Shin H."/>
            <person name="Shumway M."/>
            <person name="Specht C.A."/>
            <person name="Suh B.B."/>
            <person name="Tenney A."/>
            <person name="Utterback T.R."/>
            <person name="Wickes B.L."/>
            <person name="Wortman J.R."/>
            <person name="Wye N.H."/>
            <person name="Kronstad J.W."/>
            <person name="Lodge J.K."/>
            <person name="Heitman J."/>
            <person name="Davis R.W."/>
            <person name="Fraser C.M."/>
            <person name="Hyman R.W."/>
        </authorList>
    </citation>
    <scope>NUCLEOTIDE SEQUENCE [LARGE SCALE GENOMIC DNA]</scope>
    <source>
        <strain>JEC21 / ATCC MYA-565</strain>
    </source>
</reference>
<comment type="function">
    <text evidence="1">Component of the Mediator complex, a coactivator involved in the regulated transcription of nearly all RNA polymerase II-dependent genes. Mediator functions as a bridge to convey information from gene-specific regulatory proteins to the basal RNA polymerase II transcription machinery. Mediator is recruited to promoters by direct interactions with regulatory proteins and serves as a scaffold for the assembly of a functional preinitiation complex with RNA polymerase II and the general transcription factors (By similarity).</text>
</comment>
<comment type="subunit">
    <text evidence="1">Component of the Mediator complex.</text>
</comment>
<comment type="subcellular location">
    <subcellularLocation>
        <location evidence="1">Nucleus</location>
    </subcellularLocation>
</comment>
<comment type="similarity">
    <text evidence="4">Belongs to the Mediator complex subunit 4 family.</text>
</comment>
<accession>P0CO72</accession>
<accession>Q55QP0</accession>
<accession>Q5KFH5</accession>